<accession>Q9Z0R4</accession>
<accession>F8VQE5</accession>
<accession>Q9R143</accession>
<sequence>MAQFPTPFGGSLDVWAITVEERAKHDQQFLSLKPIAGFITGDQARNFFFQSGLPQPVLAQIWALADMNNDGRMDQVEFSIAMKLIKLKLQGYQLPSTLPPVMKQQPVAISSAPAFGIGGIASMPPLTAVAPVPMGSIPVVGMSPPLVSSVPPAAVPPLANGAPPVIQPLPAFAHPAATLPKSSSFSRSGPGSQLNTKLQKAQSFDVASAPPAAEWAVPQSSRLKYRQLFNSHDKTMSGHLTGPQARTILMQSSLPQAQLASIWNLSDIDQDGKLTAEEFILAMHLIDVAMSGQPLPPVLPPEYIPPSFRRVRSGSGMSVISSSSVDQRLPEEPSSEDEQQPEKKLPVTFEDKKRENFERGSVELEKRRQALLEQQRKEQERLAQLERAEQERKERERQEQERKRQLELEKQLEKQRELERQREEERRKEIERREAAKRELERQRQLEWERNRRQELLNQRNKEQEGTVVLKARRKTLEFELEALNDKKHQLEGKLQDIRCRLATQRQEIESTNKSRELRIAEITHLQQQLQESQQMLGRLIPEKQILSDQLKQVQQNSLHRDSLLTLKRALEAKELARQQLREQLDEVERETRSKLQEIDVFNNQLKELREIHSKQQLQKQRSLEAARLKQKEQERKSLELEKQKEDAQRRVQERDKQWLEHVQQEEQPRPRKPHEEDRLKREDSVRKKEAEERAKPEMQDKQSRLFHPHQEPAKLATQAPWSTTEKGPLTISAQESVKVVYYRALYPFESRSHDEITIQPGDIVMVDESQTGEPGWLGGELKGKTGWFPANYAEKIPENEVPTPAKPVTDLTSAPAPKLALRETPAPLPVTSSEPSTTPNNWADFSSTWPSSSNEKPETDNWDTWAAQPSLTVPSAGQLRQRSAFTPATATGSSPSPVLGQGEKVEGLQAQALYPWRAKKDNHLNFNKSDVITVLEQQDMWWFGEVQGQKGWFPKSYVKLISGPVRKSTSIDTGPTESPASLKRVASPAAKPAIPGEEFIAMYTYESSEQGDLTFQQGDVIVVTKKDGDWWTGTVGDKSGVFPSNYVRLKDSEGSGTAGKTGSLGKKPEIAQVIASYAATGPEQLTLAPGQLILIRKKNPGGWWEGELQARGKKRQIGWFPANYVKLLSPGTSKITPTELPKTAVQPAVCQVIGMYDYTAQNDDELAFSKGQIINVLNKEDPDWWKGEVSGQVGLFPSNYVKLTTDMDPSQQWCSDLHLLDMLTPTERKRQGYIHELIVTEENYVNDLQLVTEIFQKPLTESELLTEKEVAMIFVNWKELIMCNIKLLKALRVRKKMSGEKMPVKMIGDILSAQLPHMQPYIRFCSCQLNGAALIQQKTDEAPDFKEFVKRLAMDPRCKGMPLSSFILKPMQRVTRYPLIIKNILENTPENHPDHSHLKHALEKAEELCSQVNEGVREKENSDRLEWIQAHVQCEGLSEQLVFNSVTNCLGPRKFLHSGKLYKAKSNKELYGFLFNDFLLLTQITKPLGSSGTDKVFSPKSNLQYKMYKTPIFLNEVLVKLPTDPSGDEPIFHISHIDRVYTLRAESINERTAWVQKIKAASELYIETEKKKREKAYLVRSQRATGIGRLMVNVVEGIELKPCRSHGKSNPYCEVTMGSQCHITKTIQDTLNPKWNSNCQFFIRDLEQEVLCITVFERDQFSPDDFLGRTEIRVADIKKDQGSKGPVTKCLLLHEVPTGEIVVRLDLQLFDEP</sequence>
<gene>
    <name evidence="24" type="primary">Itsn1</name>
    <name evidence="21" type="synonym">Ese1</name>
    <name type="synonym">Itsn</name>
</gene>
<proteinExistence type="evidence at protein level"/>
<name>ITSN1_MOUSE</name>
<protein>
    <recommendedName>
        <fullName evidence="23">Intersectin-1</fullName>
    </recommendedName>
    <alternativeName>
        <fullName evidence="21">EH and SH3 domains protein 1</fullName>
    </alternativeName>
</protein>
<keyword id="KW-0002">3D-structure</keyword>
<keyword id="KW-0025">Alternative splicing</keyword>
<keyword id="KW-0106">Calcium</keyword>
<keyword id="KW-1003">Cell membrane</keyword>
<keyword id="KW-0966">Cell projection</keyword>
<keyword id="KW-0168">Coated pit</keyword>
<keyword id="KW-0175">Coiled coil</keyword>
<keyword id="KW-0963">Cytoplasm</keyword>
<keyword id="KW-0968">Cytoplasmic vesicle</keyword>
<keyword id="KW-0254">Endocytosis</keyword>
<keyword id="KW-0967">Endosome</keyword>
<keyword id="KW-0268">Exocytosis</keyword>
<keyword id="KW-0472">Membrane</keyword>
<keyword id="KW-0479">Metal-binding</keyword>
<keyword id="KW-0539">Nucleus</keyword>
<keyword id="KW-0597">Phosphoprotein</keyword>
<keyword id="KW-0653">Protein transport</keyword>
<keyword id="KW-1185">Reference proteome</keyword>
<keyword id="KW-0677">Repeat</keyword>
<keyword id="KW-0728">SH3 domain</keyword>
<keyword id="KW-0770">Synapse</keyword>
<keyword id="KW-0771">Synaptosome</keyword>
<keyword id="KW-0813">Transport</keyword>
<evidence type="ECO:0000250" key="1"/>
<evidence type="ECO:0000250" key="2">
    <source>
        <dbReference type="UniProtKB" id="Q15811"/>
    </source>
</evidence>
<evidence type="ECO:0000250" key="3">
    <source>
        <dbReference type="UniProtKB" id="Q9WVE9"/>
    </source>
</evidence>
<evidence type="ECO:0000255" key="4"/>
<evidence type="ECO:0000255" key="5">
    <source>
        <dbReference type="PROSITE-ProRule" id="PRU00041"/>
    </source>
</evidence>
<evidence type="ECO:0000255" key="6">
    <source>
        <dbReference type="PROSITE-ProRule" id="PRU00062"/>
    </source>
</evidence>
<evidence type="ECO:0000255" key="7">
    <source>
        <dbReference type="PROSITE-ProRule" id="PRU00077"/>
    </source>
</evidence>
<evidence type="ECO:0000255" key="8">
    <source>
        <dbReference type="PROSITE-ProRule" id="PRU00145"/>
    </source>
</evidence>
<evidence type="ECO:0000255" key="9">
    <source>
        <dbReference type="PROSITE-ProRule" id="PRU00192"/>
    </source>
</evidence>
<evidence type="ECO:0000255" key="10">
    <source>
        <dbReference type="PROSITE-ProRule" id="PRU00448"/>
    </source>
</evidence>
<evidence type="ECO:0000256" key="11">
    <source>
        <dbReference type="SAM" id="MobiDB-lite"/>
    </source>
</evidence>
<evidence type="ECO:0000269" key="12">
    <source>
    </source>
</evidence>
<evidence type="ECO:0000269" key="13">
    <source>
    </source>
</evidence>
<evidence type="ECO:0000269" key="14">
    <source>
    </source>
</evidence>
<evidence type="ECO:0000269" key="15">
    <source>
    </source>
</evidence>
<evidence type="ECO:0000269" key="16">
    <source>
    </source>
</evidence>
<evidence type="ECO:0000269" key="17">
    <source>
    </source>
</evidence>
<evidence type="ECO:0000269" key="18">
    <source>
    </source>
</evidence>
<evidence type="ECO:0000269" key="19">
    <source>
    </source>
</evidence>
<evidence type="ECO:0000269" key="20">
    <source>
    </source>
</evidence>
<evidence type="ECO:0000303" key="21">
    <source>
    </source>
</evidence>
<evidence type="ECO:0000303" key="22">
    <source ref="3"/>
</evidence>
<evidence type="ECO:0000305" key="23"/>
<evidence type="ECO:0000312" key="24">
    <source>
        <dbReference type="MGI" id="MGI:1338069"/>
    </source>
</evidence>
<evidence type="ECO:0007744" key="25">
    <source>
    </source>
</evidence>
<evidence type="ECO:0007744" key="26">
    <source>
    </source>
</evidence>
<evidence type="ECO:0007744" key="27">
    <source>
    </source>
</evidence>
<evidence type="ECO:0007744" key="28">
    <source>
    </source>
</evidence>
<evidence type="ECO:0007829" key="29">
    <source>
        <dbReference type="PDB" id="3JV3"/>
    </source>
</evidence>
<comment type="function">
    <text evidence="2 3 12 14 15 18">Adapter protein that provides a link between the endocytic membrane traffic and the actin assembly machinery (PubMed:10064583). Acts as a guanine nucleotide exchange factor (GEF) for CDC42, and thereby stimulates actin nucleation mediated by WASL and the ARP2/3 complex (By similarity). Plays a role in the assembly and maturation of clathrin-coated vesicles (By similarity). Recruits FCHSD2 to clathrin-coated pits (By similarity). Involved in endocytosis of activated EGFR, and probably also other growth factor receptors (PubMed:16914641). Involved in endocytosis of integrin beta-1 (ITGB1) and transferrin receptor (TFR); internalization of ITGB1 as DAB2-dependent cargo but not TFR may involve association with DAB2 (By similarity). Promotes ubiquitination and subsequent degradation of EGFR, and thereby contributes to the down-regulation of EGFR-dependent signaling pathways (PubMed:16914641). In chromaffin cells, required for normal exocytosis of catecholamines (PubMed:18676989). Required for rapid replenishment of release-ready synaptic vesicles at presynaptic active zones (PubMed:23633571). Inhibits ARHGAP31 activity toward RAC1 (By similarity).</text>
</comment>
<comment type="function">
    <molecule>Isoform 1</molecule>
    <text evidence="15">Plays a role in synaptic vesicle endocytosis in brain neurons.</text>
</comment>
<comment type="cofactor">
    <cofactor evidence="5">
        <name>Ca(2+)</name>
        <dbReference type="ChEBI" id="CHEBI:29108"/>
    </cofactor>
</comment>
<comment type="subunit">
    <text evidence="2 3 12 13 14 16 19 20">Interacts (via DH domain) with CDC42. Interacts (via SH3 domain 1) with WASL (By similarity). Interacts with dynamin, SNAP25 and SNAP23 (By similarity). Interacts with clathrin-associated proteins and other components of the endocytic machinery, such as SPIN90, EPS15, EPN1, EPN2, STON2, FCHO1, FCHO2 and DAB2 (PubMed:10064583, PubMed:20448150). Interacts (via SH3 domains) with REPS1 and SGIP1. Interacts with ARHGAP31 (PubMed:11744688). Interacts with ADAM15 (By similarity). Interacts with PRRT2 (PubMed:26797119). Interacts (via SH3 domain 4) with FCHSD2 (via SH3 domain 2). Interacts (via SH3 domain 1) with DENND2B (By similarity). Interacts (via SH3 domains) with CBL (PubMed:16914641). Isoform 2: Interacts with CBL and DNM1. Isoform 2: Interacts with LMNA (By similarity). Isoform 2: Interacts with importin subunit KPNA1; this is likely to mediate its import into the nucleus (PubMed:29599122). Interacts with DNM2 (By similarity).</text>
</comment>
<comment type="interaction">
    <interactant intactId="EBI-645386">
        <id>Q9Z0R4</id>
    </interactant>
    <interactant intactId="EBI-4325995">
        <id>A6X8Z5</id>
        <label>Arhgap31</label>
    </interactant>
    <organismsDiffer>false</organismsDiffer>
    <experiments>3</experiments>
</comment>
<comment type="interaction">
    <interactant intactId="EBI-645386">
        <id>Q9Z0R4</id>
    </interactant>
    <interactant intactId="EBI-7186684">
        <id>Q8K382</id>
        <label>Dennd1a</label>
    </interactant>
    <organismsDiffer>false</organismsDiffer>
    <experiments>3</experiments>
</comment>
<comment type="interaction">
    <interactant intactId="EBI-8052786">
        <id>Q9Z0R4-2</id>
    </interactant>
    <interactant intactId="EBI-2642932">
        <id>Q6P549</id>
        <label>Inppl1</label>
    </interactant>
    <organismsDiffer>false</organismsDiffer>
    <experiments>2</experiments>
</comment>
<comment type="subcellular location">
    <subcellularLocation>
        <location evidence="14">Endomembrane system</location>
    </subcellularLocation>
    <subcellularLocation>
        <location evidence="3">Synapse</location>
        <location evidence="3">Synaptosome</location>
    </subcellularLocation>
    <subcellularLocation>
        <location evidence="2">Cell projection</location>
        <location evidence="2">Lamellipodium</location>
    </subcellularLocation>
    <subcellularLocation>
        <location evidence="2">Cell membrane</location>
    </subcellularLocation>
    <subcellularLocation>
        <location evidence="2">Membrane</location>
        <location evidence="2">Clathrin-coated pit</location>
    </subcellularLocation>
    <subcellularLocation>
        <location evidence="2">Recycling endosome</location>
    </subcellularLocation>
    <subcellularLocation>
        <location evidence="14">Endosome</location>
    </subcellularLocation>
    <subcellularLocation>
        <location evidence="14 18">Cytoplasmic vesicle</location>
    </subcellularLocation>
    <text evidence="2">Colocalizes with SGIP1 at the plasma membrane in structures corresponding most probably to clathrin-coated pits. Colocalizes with RAB13 on cytoplasmic vesicles that are most likely recycling endosomes.</text>
</comment>
<comment type="subcellular location">
    <molecule>Isoform 2</molecule>
    <subcellularLocation>
        <location evidence="2">Cytoplasm</location>
    </subcellularLocation>
    <subcellularLocation>
        <location evidence="2">Nucleus envelope</location>
    </subcellularLocation>
    <text evidence="2">Shuttles between the cytoplasm and nucleus in an XPO1/CRM1-dependent manner.</text>
</comment>
<comment type="alternative products">
    <event type="alternative splicing"/>
    <isoform>
        <id>Q9Z0R4-1</id>
        <name>1</name>
        <name>Ese1L</name>
        <sequence type="displayed"/>
    </isoform>
    <isoform>
        <id>Q9Z0R4-2</id>
        <name>2</name>
        <name evidence="2">ITSN-s</name>
        <sequence type="described" ref="VSP_004296"/>
    </isoform>
    <text>Additional isoforms seem to exist.</text>
</comment>
<comment type="tissue specificity">
    <text evidence="12 14 15 18">Detected in brain, adrenal gland and heart (PubMed:16914641, PubMed:18676989). Detected in neurons at the calyx of Held (at protein level) (PubMed:23633571). Isoform 1: Primarily detected in brain neurons. Isoform 2: Primarily detected in glia (at protein level) (PubMed:18676989). Widely expressed. Expressed at high levels in brain, heart and skeletal muscle (PubMed:10064583).</text>
</comment>
<comment type="domain">
    <text evidence="1">SH3-3, SH3-4 and SH3-5, but not SH3-1 and SH3-2 domains, bind to dynamin (By similarity). SH3-1 and SH3-4 bind to ARHGAP31.</text>
</comment>
<comment type="domain">
    <text evidence="1">The KLERQ domain binds to SNAP-25 and SNAP-23.</text>
</comment>
<comment type="domain">
    <text evidence="17">In an autoinhibited form the SH3 domain 5 may bind intramolecularly to the DH domain, thus blocking the CDC42-binding site.</text>
</comment>
<comment type="disruption phenotype">
    <text evidence="15 18">No visible phenotype, except that about 13% of the pups do not thrive. Mice are born at the expected Mendelian rate (PubMed:18676989). Mutant mice display no obvious defects in synaptic responses to single stimuli at the calyx of Held. Repetitive stimulation gives rise to decreased synaptic responses, due to perturbation of the replenishment of release-ready synaptic vesicles (PubMed:23633571).</text>
</comment>
<comment type="miscellaneous">
    <text evidence="12">Overexpression results in the inhibition of the transferrin uptake and the blockage of the clathrin-mediated endocytosis.</text>
</comment>
<organism>
    <name type="scientific">Mus musculus</name>
    <name type="common">Mouse</name>
    <dbReference type="NCBI Taxonomy" id="10090"/>
    <lineage>
        <taxon>Eukaryota</taxon>
        <taxon>Metazoa</taxon>
        <taxon>Chordata</taxon>
        <taxon>Craniata</taxon>
        <taxon>Vertebrata</taxon>
        <taxon>Euteleostomi</taxon>
        <taxon>Mammalia</taxon>
        <taxon>Eutheria</taxon>
        <taxon>Euarchontoglires</taxon>
        <taxon>Glires</taxon>
        <taxon>Rodentia</taxon>
        <taxon>Myomorpha</taxon>
        <taxon>Muroidea</taxon>
        <taxon>Muridae</taxon>
        <taxon>Murinae</taxon>
        <taxon>Mus</taxon>
        <taxon>Mus</taxon>
    </lineage>
</organism>
<dbReference type="EMBL" id="AF132481">
    <property type="protein sequence ID" value="AAD19749.1"/>
    <property type="molecule type" value="mRNA"/>
</dbReference>
<dbReference type="EMBL" id="AF132478">
    <property type="protein sequence ID" value="AAD19746.1"/>
    <property type="molecule type" value="mRNA"/>
</dbReference>
<dbReference type="EMBL" id="AC126053">
    <property type="status" value="NOT_ANNOTATED_CDS"/>
    <property type="molecule type" value="Genomic_DNA"/>
</dbReference>
<dbReference type="EMBL" id="AC131691">
    <property type="status" value="NOT_ANNOTATED_CDS"/>
    <property type="molecule type" value="Genomic_DNA"/>
</dbReference>
<dbReference type="EMBL" id="AC134837">
    <property type="status" value="NOT_ANNOTATED_CDS"/>
    <property type="molecule type" value="Genomic_DNA"/>
</dbReference>
<dbReference type="EMBL" id="AF169621">
    <property type="protein sequence ID" value="AAD48848.1"/>
    <property type="molecule type" value="mRNA"/>
</dbReference>
<dbReference type="EMBL" id="AF356517">
    <property type="protein sequence ID" value="AAK40228.1"/>
    <property type="molecule type" value="Genomic_DNA"/>
</dbReference>
<dbReference type="CCDS" id="CCDS37402.1">
    <molecule id="Q9Z0R4-1"/>
</dbReference>
<dbReference type="CCDS" id="CCDS49913.1">
    <molecule id="Q9Z0R4-2"/>
</dbReference>
<dbReference type="RefSeq" id="NP_001103745.1">
    <molecule id="Q9Z0R4-2"/>
    <property type="nucleotide sequence ID" value="NM_001110275.1"/>
</dbReference>
<dbReference type="RefSeq" id="NP_034717.2">
    <molecule id="Q9Z0R4-1"/>
    <property type="nucleotide sequence ID" value="NM_010587.2"/>
</dbReference>
<dbReference type="PDB" id="3HS8">
    <property type="method" value="X-ray"/>
    <property type="resolution" value="1.90 A"/>
    <property type="chains" value="P=840-851"/>
</dbReference>
<dbReference type="PDB" id="3JV3">
    <property type="method" value="X-ray"/>
    <property type="resolution" value="2.40 A"/>
    <property type="chains" value="A/B=1151-1431"/>
</dbReference>
<dbReference type="PDBsum" id="3HS8"/>
<dbReference type="PDBsum" id="3JV3"/>
<dbReference type="SMR" id="Q9Z0R4"/>
<dbReference type="BioGRID" id="200851">
    <property type="interactions" value="18"/>
</dbReference>
<dbReference type="FunCoup" id="Q9Z0R4">
    <property type="interactions" value="2646"/>
</dbReference>
<dbReference type="IntAct" id="Q9Z0R4">
    <property type="interactions" value="18"/>
</dbReference>
<dbReference type="MINT" id="Q9Z0R4"/>
<dbReference type="STRING" id="10090.ENSMUSP00000109635"/>
<dbReference type="GlyGen" id="Q9Z0R4">
    <property type="glycosylation" value="5 sites, 1 O-linked glycan (3 sites)"/>
</dbReference>
<dbReference type="iPTMnet" id="Q9Z0R4"/>
<dbReference type="PhosphoSitePlus" id="Q9Z0R4"/>
<dbReference type="SwissPalm" id="Q9Z0R4"/>
<dbReference type="jPOST" id="Q9Z0R4"/>
<dbReference type="PaxDb" id="10090-ENSMUSP00000109635"/>
<dbReference type="PeptideAtlas" id="Q9Z0R4"/>
<dbReference type="ProteomicsDB" id="269017">
    <molecule id="Q9Z0R4-1"/>
</dbReference>
<dbReference type="ProteomicsDB" id="269018">
    <molecule id="Q9Z0R4-2"/>
</dbReference>
<dbReference type="Pumba" id="Q9Z0R4"/>
<dbReference type="Antibodypedia" id="7532">
    <property type="antibodies" value="83 antibodies from 19 providers"/>
</dbReference>
<dbReference type="DNASU" id="16443"/>
<dbReference type="Ensembl" id="ENSMUST00000056482.14">
    <molecule id="Q9Z0R4-2"/>
    <property type="protein sequence ID" value="ENSMUSP00000056011.8"/>
    <property type="gene ID" value="ENSMUSG00000022957.21"/>
</dbReference>
<dbReference type="Ensembl" id="ENSMUST00000114002.9">
    <molecule id="Q9Z0R4-1"/>
    <property type="protein sequence ID" value="ENSMUSP00000109635.3"/>
    <property type="gene ID" value="ENSMUSG00000022957.21"/>
</dbReference>
<dbReference type="GeneID" id="16443"/>
<dbReference type="KEGG" id="mmu:16443"/>
<dbReference type="UCSC" id="uc007zyi.2">
    <molecule id="Q9Z0R4-1"/>
    <property type="organism name" value="mouse"/>
</dbReference>
<dbReference type="AGR" id="MGI:1338069"/>
<dbReference type="CTD" id="6453"/>
<dbReference type="MGI" id="MGI:1338069">
    <property type="gene designation" value="Itsn1"/>
</dbReference>
<dbReference type="VEuPathDB" id="HostDB:ENSMUSG00000022957"/>
<dbReference type="eggNOG" id="KOG1029">
    <property type="taxonomic scope" value="Eukaryota"/>
</dbReference>
<dbReference type="eggNOG" id="KOG4305">
    <property type="taxonomic scope" value="Eukaryota"/>
</dbReference>
<dbReference type="GeneTree" id="ENSGT00940000157065"/>
<dbReference type="HOGENOM" id="CLU_002819_2_0_1"/>
<dbReference type="InParanoid" id="Q9Z0R4"/>
<dbReference type="OMA" id="XCSDLHL"/>
<dbReference type="OrthoDB" id="2015333at2759"/>
<dbReference type="TreeFam" id="TF324293"/>
<dbReference type="Reactome" id="R-MMU-193648">
    <property type="pathway name" value="NRAGE signals death through JNK"/>
</dbReference>
<dbReference type="Reactome" id="R-MMU-3928662">
    <property type="pathway name" value="EPHB-mediated forward signaling"/>
</dbReference>
<dbReference type="Reactome" id="R-MMU-416482">
    <property type="pathway name" value="G alpha (12/13) signalling events"/>
</dbReference>
<dbReference type="Reactome" id="R-MMU-8856825">
    <property type="pathway name" value="Cargo recognition for clathrin-mediated endocytosis"/>
</dbReference>
<dbReference type="Reactome" id="R-MMU-8856828">
    <property type="pathway name" value="Clathrin-mediated endocytosis"/>
</dbReference>
<dbReference type="Reactome" id="R-MMU-9013148">
    <property type="pathway name" value="CDC42 GTPase cycle"/>
</dbReference>
<dbReference type="Reactome" id="R-MMU-9013406">
    <property type="pathway name" value="RHOQ GTPase cycle"/>
</dbReference>
<dbReference type="Reactome" id="R-MMU-9013408">
    <property type="pathway name" value="RHOG GTPase cycle"/>
</dbReference>
<dbReference type="BioGRID-ORCS" id="16443">
    <property type="hits" value="1 hit in 78 CRISPR screens"/>
</dbReference>
<dbReference type="CD-CODE" id="CE726F99">
    <property type="entry name" value="Postsynaptic density"/>
</dbReference>
<dbReference type="ChiTaRS" id="Itsn1">
    <property type="organism name" value="mouse"/>
</dbReference>
<dbReference type="EvolutionaryTrace" id="Q9Z0R4"/>
<dbReference type="PRO" id="PR:Q9Z0R4"/>
<dbReference type="Proteomes" id="UP000000589">
    <property type="component" value="Chromosome 16"/>
</dbReference>
<dbReference type="RNAct" id="Q9Z0R4">
    <property type="molecule type" value="protein"/>
</dbReference>
<dbReference type="Bgee" id="ENSMUSG00000022957">
    <property type="expression patterns" value="Expressed in floor plate of midbrain and 277 other cell types or tissues"/>
</dbReference>
<dbReference type="ExpressionAtlas" id="Q9Z0R4">
    <property type="expression patterns" value="baseline and differential"/>
</dbReference>
<dbReference type="GO" id="GO:0044305">
    <property type="term" value="C:calyx of Held"/>
    <property type="evidence" value="ECO:0000314"/>
    <property type="project" value="SynGO"/>
</dbReference>
<dbReference type="GO" id="GO:0005905">
    <property type="term" value="C:clathrin-coated pit"/>
    <property type="evidence" value="ECO:0000314"/>
    <property type="project" value="MGI"/>
</dbReference>
<dbReference type="GO" id="GO:0005737">
    <property type="term" value="C:cytoplasm"/>
    <property type="evidence" value="ECO:0000250"/>
    <property type="project" value="UniProtKB"/>
</dbReference>
<dbReference type="GO" id="GO:0005829">
    <property type="term" value="C:cytosol"/>
    <property type="evidence" value="ECO:0000314"/>
    <property type="project" value="MGI"/>
</dbReference>
<dbReference type="GO" id="GO:0030139">
    <property type="term" value="C:endocytic vesicle"/>
    <property type="evidence" value="ECO:0000314"/>
    <property type="project" value="MGI"/>
</dbReference>
<dbReference type="GO" id="GO:0030027">
    <property type="term" value="C:lamellipodium"/>
    <property type="evidence" value="ECO:0000314"/>
    <property type="project" value="MGI"/>
</dbReference>
<dbReference type="GO" id="GO:0005635">
    <property type="term" value="C:nuclear envelope"/>
    <property type="evidence" value="ECO:0000250"/>
    <property type="project" value="UniProtKB"/>
</dbReference>
<dbReference type="GO" id="GO:0005886">
    <property type="term" value="C:plasma membrane"/>
    <property type="evidence" value="ECO:0007669"/>
    <property type="project" value="UniProtKB-SubCell"/>
</dbReference>
<dbReference type="GO" id="GO:0098833">
    <property type="term" value="C:presynaptic endocytic zone"/>
    <property type="evidence" value="ECO:0000314"/>
    <property type="project" value="SynGO"/>
</dbReference>
<dbReference type="GO" id="GO:0055037">
    <property type="term" value="C:recycling endosome"/>
    <property type="evidence" value="ECO:0007669"/>
    <property type="project" value="UniProtKB-SubCell"/>
</dbReference>
<dbReference type="GO" id="GO:0005509">
    <property type="term" value="F:calcium ion binding"/>
    <property type="evidence" value="ECO:0007669"/>
    <property type="project" value="InterPro"/>
</dbReference>
<dbReference type="GO" id="GO:0005085">
    <property type="term" value="F:guanyl-nucleotide exchange factor activity"/>
    <property type="evidence" value="ECO:0007669"/>
    <property type="project" value="InterPro"/>
</dbReference>
<dbReference type="GO" id="GO:0019209">
    <property type="term" value="F:kinase activator activity"/>
    <property type="evidence" value="ECO:0000314"/>
    <property type="project" value="MGI"/>
</dbReference>
<dbReference type="GO" id="GO:0007267">
    <property type="term" value="P:cell-cell signaling"/>
    <property type="evidence" value="ECO:0000315"/>
    <property type="project" value="MGI"/>
</dbReference>
<dbReference type="GO" id="GO:0006897">
    <property type="term" value="P:endocytosis"/>
    <property type="evidence" value="ECO:0000315"/>
    <property type="project" value="MGI"/>
</dbReference>
<dbReference type="GO" id="GO:0006887">
    <property type="term" value="P:exocytosis"/>
    <property type="evidence" value="ECO:0007669"/>
    <property type="project" value="UniProtKB-KW"/>
</dbReference>
<dbReference type="GO" id="GO:0043524">
    <property type="term" value="P:negative regulation of neuron apoptotic process"/>
    <property type="evidence" value="ECO:0000315"/>
    <property type="project" value="MGI"/>
</dbReference>
<dbReference type="GO" id="GO:0051402">
    <property type="term" value="P:neuron apoptotic process"/>
    <property type="evidence" value="ECO:0000315"/>
    <property type="project" value="MGI"/>
</dbReference>
<dbReference type="GO" id="GO:0051897">
    <property type="term" value="P:positive regulation of phosphatidylinositol 3-kinase/protein kinase B signal transduction"/>
    <property type="evidence" value="ECO:0000314"/>
    <property type="project" value="MGI"/>
</dbReference>
<dbReference type="GO" id="GO:0015031">
    <property type="term" value="P:protein transport"/>
    <property type="evidence" value="ECO:0007669"/>
    <property type="project" value="UniProtKB-KW"/>
</dbReference>
<dbReference type="GO" id="GO:0007264">
    <property type="term" value="P:small GTPase-mediated signal transduction"/>
    <property type="evidence" value="ECO:0000314"/>
    <property type="project" value="MGI"/>
</dbReference>
<dbReference type="GO" id="GO:0048488">
    <property type="term" value="P:synaptic vesicle endocytosis"/>
    <property type="evidence" value="ECO:0000314"/>
    <property type="project" value="SynGO"/>
</dbReference>
<dbReference type="CDD" id="cd08375">
    <property type="entry name" value="C2_Intersectin"/>
    <property type="match status" value="1"/>
</dbReference>
<dbReference type="CDD" id="cd00052">
    <property type="entry name" value="EH"/>
    <property type="match status" value="2"/>
</dbReference>
<dbReference type="CDD" id="cd13264">
    <property type="entry name" value="PH_ITSN"/>
    <property type="match status" value="1"/>
</dbReference>
<dbReference type="CDD" id="cd00160">
    <property type="entry name" value="RhoGEF"/>
    <property type="match status" value="1"/>
</dbReference>
<dbReference type="CDD" id="cd11987">
    <property type="entry name" value="SH3_Intersectin1_1"/>
    <property type="match status" value="1"/>
</dbReference>
<dbReference type="CDD" id="cd11989">
    <property type="entry name" value="SH3_Intersectin1_2"/>
    <property type="match status" value="1"/>
</dbReference>
<dbReference type="CDD" id="cd11991">
    <property type="entry name" value="SH3_Intersectin1_3"/>
    <property type="match status" value="1"/>
</dbReference>
<dbReference type="CDD" id="cd11993">
    <property type="entry name" value="SH3_Intersectin1_4"/>
    <property type="match status" value="1"/>
</dbReference>
<dbReference type="CDD" id="cd11995">
    <property type="entry name" value="SH3_Intersectin1_5"/>
    <property type="match status" value="1"/>
</dbReference>
<dbReference type="FunFam" id="1.20.900.10:FF:000011">
    <property type="entry name" value="Intersectin 1"/>
    <property type="match status" value="1"/>
</dbReference>
<dbReference type="FunFam" id="2.30.29.30:FF:000069">
    <property type="entry name" value="Intersectin 1"/>
    <property type="match status" value="1"/>
</dbReference>
<dbReference type="FunFam" id="2.30.30.40:FF:000024">
    <property type="entry name" value="Intersectin 1"/>
    <property type="match status" value="1"/>
</dbReference>
<dbReference type="FunFam" id="2.30.30.40:FF:000041">
    <property type="entry name" value="Intersectin 1"/>
    <property type="match status" value="2"/>
</dbReference>
<dbReference type="FunFam" id="2.60.40.150:FF:000029">
    <property type="entry name" value="Intersectin 1"/>
    <property type="match status" value="1"/>
</dbReference>
<dbReference type="FunFam" id="1.10.238.10:FF:000055">
    <property type="entry name" value="Intersectin-1 isoform 1"/>
    <property type="match status" value="1"/>
</dbReference>
<dbReference type="FunFam" id="1.10.238.10:FF:000046">
    <property type="entry name" value="intersectin-1 isoform X2"/>
    <property type="match status" value="1"/>
</dbReference>
<dbReference type="FunFam" id="2.30.30.40:FF:000122">
    <property type="entry name" value="intersectin-1 isoform X2"/>
    <property type="match status" value="1"/>
</dbReference>
<dbReference type="Gene3D" id="2.60.40.150">
    <property type="entry name" value="C2 domain"/>
    <property type="match status" value="1"/>
</dbReference>
<dbReference type="Gene3D" id="1.20.900.10">
    <property type="entry name" value="Dbl homology (DH) domain"/>
    <property type="match status" value="1"/>
</dbReference>
<dbReference type="Gene3D" id="1.10.238.10">
    <property type="entry name" value="EF-hand"/>
    <property type="match status" value="2"/>
</dbReference>
<dbReference type="Gene3D" id="2.30.29.30">
    <property type="entry name" value="Pleckstrin-homology domain (PH domain)/Phosphotyrosine-binding domain (PTB)"/>
    <property type="match status" value="1"/>
</dbReference>
<dbReference type="Gene3D" id="2.30.30.40">
    <property type="entry name" value="SH3 Domains"/>
    <property type="match status" value="5"/>
</dbReference>
<dbReference type="InterPro" id="IPR000008">
    <property type="entry name" value="C2_dom"/>
</dbReference>
<dbReference type="InterPro" id="IPR035892">
    <property type="entry name" value="C2_domain_sf"/>
</dbReference>
<dbReference type="InterPro" id="IPR035899">
    <property type="entry name" value="DBL_dom_sf"/>
</dbReference>
<dbReference type="InterPro" id="IPR000219">
    <property type="entry name" value="DH_dom"/>
</dbReference>
<dbReference type="InterPro" id="IPR011992">
    <property type="entry name" value="EF-hand-dom_pair"/>
</dbReference>
<dbReference type="InterPro" id="IPR018247">
    <property type="entry name" value="EF_Hand_1_Ca_BS"/>
</dbReference>
<dbReference type="InterPro" id="IPR002048">
    <property type="entry name" value="EF_hand_dom"/>
</dbReference>
<dbReference type="InterPro" id="IPR000261">
    <property type="entry name" value="EH_dom"/>
</dbReference>
<dbReference type="InterPro" id="IPR051480">
    <property type="entry name" value="Endocytic_GEF_Adapter"/>
</dbReference>
<dbReference type="InterPro" id="IPR001331">
    <property type="entry name" value="GDS_CDC24_CS"/>
</dbReference>
<dbReference type="InterPro" id="IPR032140">
    <property type="entry name" value="INTAP"/>
</dbReference>
<dbReference type="InterPro" id="IPR011993">
    <property type="entry name" value="PH-like_dom_sf"/>
</dbReference>
<dbReference type="InterPro" id="IPR001849">
    <property type="entry name" value="PH_domain"/>
</dbReference>
<dbReference type="InterPro" id="IPR036028">
    <property type="entry name" value="SH3-like_dom_sf"/>
</dbReference>
<dbReference type="InterPro" id="IPR001452">
    <property type="entry name" value="SH3_domain"/>
</dbReference>
<dbReference type="PANTHER" id="PTHR46006:SF9">
    <property type="entry name" value="INTERSECTIN-1"/>
    <property type="match status" value="1"/>
</dbReference>
<dbReference type="PANTHER" id="PTHR46006">
    <property type="entry name" value="RHO GUANINE NUCLEOTIDE EXCHANGE FACTOR AT 64C, ISOFORM A"/>
    <property type="match status" value="1"/>
</dbReference>
<dbReference type="Pfam" id="PF00168">
    <property type="entry name" value="C2"/>
    <property type="match status" value="1"/>
</dbReference>
<dbReference type="Pfam" id="PF12763">
    <property type="entry name" value="EH"/>
    <property type="match status" value="2"/>
</dbReference>
<dbReference type="Pfam" id="PF16617">
    <property type="entry name" value="INTAP"/>
    <property type="match status" value="1"/>
</dbReference>
<dbReference type="Pfam" id="PF16652">
    <property type="entry name" value="PH_13"/>
    <property type="match status" value="1"/>
</dbReference>
<dbReference type="Pfam" id="PF00621">
    <property type="entry name" value="RhoGEF"/>
    <property type="match status" value="1"/>
</dbReference>
<dbReference type="Pfam" id="PF00018">
    <property type="entry name" value="SH3_1"/>
    <property type="match status" value="3"/>
</dbReference>
<dbReference type="Pfam" id="PF07653">
    <property type="entry name" value="SH3_2"/>
    <property type="match status" value="1"/>
</dbReference>
<dbReference type="Pfam" id="PF14604">
    <property type="entry name" value="SH3_9"/>
    <property type="match status" value="1"/>
</dbReference>
<dbReference type="PRINTS" id="PR00452">
    <property type="entry name" value="SH3DOMAIN"/>
</dbReference>
<dbReference type="SMART" id="SM00239">
    <property type="entry name" value="C2"/>
    <property type="match status" value="1"/>
</dbReference>
<dbReference type="SMART" id="SM00054">
    <property type="entry name" value="EFh"/>
    <property type="match status" value="2"/>
</dbReference>
<dbReference type="SMART" id="SM00027">
    <property type="entry name" value="EH"/>
    <property type="match status" value="2"/>
</dbReference>
<dbReference type="SMART" id="SM00233">
    <property type="entry name" value="PH"/>
    <property type="match status" value="1"/>
</dbReference>
<dbReference type="SMART" id="SM00325">
    <property type="entry name" value="RhoGEF"/>
    <property type="match status" value="1"/>
</dbReference>
<dbReference type="SMART" id="SM00326">
    <property type="entry name" value="SH3"/>
    <property type="match status" value="5"/>
</dbReference>
<dbReference type="SUPFAM" id="SSF49562">
    <property type="entry name" value="C2 domain (Calcium/lipid-binding domain, CaLB)"/>
    <property type="match status" value="1"/>
</dbReference>
<dbReference type="SUPFAM" id="SSF48065">
    <property type="entry name" value="DBL homology domain (DH-domain)"/>
    <property type="match status" value="1"/>
</dbReference>
<dbReference type="SUPFAM" id="SSF47473">
    <property type="entry name" value="EF-hand"/>
    <property type="match status" value="2"/>
</dbReference>
<dbReference type="SUPFAM" id="SSF50729">
    <property type="entry name" value="PH domain-like"/>
    <property type="match status" value="1"/>
</dbReference>
<dbReference type="SUPFAM" id="SSF50044">
    <property type="entry name" value="SH3-domain"/>
    <property type="match status" value="5"/>
</dbReference>
<dbReference type="PROSITE" id="PS50004">
    <property type="entry name" value="C2"/>
    <property type="match status" value="1"/>
</dbReference>
<dbReference type="PROSITE" id="PS00741">
    <property type="entry name" value="DH_1"/>
    <property type="match status" value="1"/>
</dbReference>
<dbReference type="PROSITE" id="PS50010">
    <property type="entry name" value="DH_2"/>
    <property type="match status" value="1"/>
</dbReference>
<dbReference type="PROSITE" id="PS00018">
    <property type="entry name" value="EF_HAND_1"/>
    <property type="match status" value="2"/>
</dbReference>
<dbReference type="PROSITE" id="PS50222">
    <property type="entry name" value="EF_HAND_2"/>
    <property type="match status" value="2"/>
</dbReference>
<dbReference type="PROSITE" id="PS50031">
    <property type="entry name" value="EH"/>
    <property type="match status" value="2"/>
</dbReference>
<dbReference type="PROSITE" id="PS50003">
    <property type="entry name" value="PH_DOMAIN"/>
    <property type="match status" value="1"/>
</dbReference>
<dbReference type="PROSITE" id="PS50002">
    <property type="entry name" value="SH3"/>
    <property type="match status" value="5"/>
</dbReference>
<feature type="chain" id="PRO_0000080958" description="Intersectin-1">
    <location>
        <begin position="1"/>
        <end position="1714"/>
    </location>
</feature>
<feature type="domain" description="EH 1" evidence="7">
    <location>
        <begin position="21"/>
        <end position="109"/>
    </location>
</feature>
<feature type="domain" description="EF-hand 1" evidence="10">
    <location>
        <begin position="53"/>
        <end position="88"/>
    </location>
</feature>
<feature type="domain" description="EH 2" evidence="7">
    <location>
        <begin position="221"/>
        <end position="310"/>
    </location>
</feature>
<feature type="domain" description="EF-hand 2" evidence="10">
    <location>
        <begin position="254"/>
        <end position="289"/>
    </location>
</feature>
<feature type="domain" description="SH3 1" evidence="9">
    <location>
        <begin position="738"/>
        <end position="799"/>
    </location>
</feature>
<feature type="domain" description="SH3 2" evidence="9">
    <location>
        <begin position="906"/>
        <end position="964"/>
    </location>
</feature>
<feature type="domain" description="SH3 3" evidence="9">
    <location>
        <begin position="995"/>
        <end position="1053"/>
    </location>
</feature>
<feature type="domain" description="SH3 4" evidence="9">
    <location>
        <begin position="1067"/>
        <end position="1131"/>
    </location>
</feature>
<feature type="domain" description="SH3 5" evidence="9">
    <location>
        <begin position="1148"/>
        <end position="1207"/>
    </location>
</feature>
<feature type="domain" description="DH" evidence="6">
    <location>
        <begin position="1230"/>
        <end position="1416"/>
    </location>
</feature>
<feature type="domain" description="PH" evidence="8">
    <location>
        <begin position="1455"/>
        <end position="1564"/>
    </location>
</feature>
<feature type="domain" description="C2" evidence="5">
    <location>
        <begin position="1572"/>
        <end position="1688"/>
    </location>
</feature>
<feature type="region of interest" description="Disordered" evidence="11">
    <location>
        <begin position="310"/>
        <end position="356"/>
    </location>
</feature>
<feature type="region of interest" description="KLERQ">
    <location>
        <begin position="326"/>
        <end position="702"/>
    </location>
</feature>
<feature type="region of interest" description="Disordered" evidence="11">
    <location>
        <begin position="614"/>
        <end position="706"/>
    </location>
</feature>
<feature type="region of interest" description="Disordered" evidence="11">
    <location>
        <begin position="827"/>
        <end position="863"/>
    </location>
</feature>
<feature type="region of interest" description="Required for interaction with FCHSD2" evidence="2">
    <location>
        <begin position="1067"/>
        <end position="1131"/>
    </location>
</feature>
<feature type="coiled-coil region" evidence="4">
    <location>
        <begin position="354"/>
        <end position="658"/>
    </location>
</feature>
<feature type="short sequence motif" description="Bipartite nuclear localization signal; in isoform 2" evidence="2">
    <location>
        <begin position="1097"/>
        <end position="1120"/>
    </location>
</feature>
<feature type="compositionally biased region" description="Low complexity" evidence="11">
    <location>
        <begin position="310"/>
        <end position="325"/>
    </location>
</feature>
<feature type="compositionally biased region" description="Basic and acidic residues" evidence="11">
    <location>
        <begin position="340"/>
        <end position="356"/>
    </location>
</feature>
<feature type="compositionally biased region" description="Basic and acidic residues" evidence="11">
    <location>
        <begin position="622"/>
        <end position="706"/>
    </location>
</feature>
<feature type="compositionally biased region" description="Polar residues" evidence="11">
    <location>
        <begin position="831"/>
        <end position="855"/>
    </location>
</feature>
<feature type="binding site" evidence="10">
    <location>
        <position position="66"/>
    </location>
    <ligand>
        <name>Ca(2+)</name>
        <dbReference type="ChEBI" id="CHEBI:29108"/>
        <label>1</label>
    </ligand>
</feature>
<feature type="binding site" evidence="10">
    <location>
        <position position="68"/>
    </location>
    <ligand>
        <name>Ca(2+)</name>
        <dbReference type="ChEBI" id="CHEBI:29108"/>
        <label>1</label>
    </ligand>
</feature>
<feature type="binding site" evidence="10">
    <location>
        <position position="70"/>
    </location>
    <ligand>
        <name>Ca(2+)</name>
        <dbReference type="ChEBI" id="CHEBI:29108"/>
        <label>1</label>
    </ligand>
</feature>
<feature type="binding site" evidence="10">
    <location>
        <position position="72"/>
    </location>
    <ligand>
        <name>Ca(2+)</name>
        <dbReference type="ChEBI" id="CHEBI:29108"/>
        <label>1</label>
    </ligand>
</feature>
<feature type="binding site" evidence="10">
    <location>
        <position position="77"/>
    </location>
    <ligand>
        <name>Ca(2+)</name>
        <dbReference type="ChEBI" id="CHEBI:29108"/>
        <label>1</label>
    </ligand>
</feature>
<feature type="binding site" evidence="10">
    <location>
        <position position="267"/>
    </location>
    <ligand>
        <name>Ca(2+)</name>
        <dbReference type="ChEBI" id="CHEBI:29108"/>
        <label>2</label>
    </ligand>
</feature>
<feature type="binding site" evidence="10">
    <location>
        <position position="269"/>
    </location>
    <ligand>
        <name>Ca(2+)</name>
        <dbReference type="ChEBI" id="CHEBI:29108"/>
        <label>2</label>
    </ligand>
</feature>
<feature type="binding site" evidence="10">
    <location>
        <position position="271"/>
    </location>
    <ligand>
        <name>Ca(2+)</name>
        <dbReference type="ChEBI" id="CHEBI:29108"/>
        <label>2</label>
    </ligand>
</feature>
<feature type="binding site" evidence="10">
    <location>
        <position position="273"/>
    </location>
    <ligand>
        <name>Ca(2+)</name>
        <dbReference type="ChEBI" id="CHEBI:29108"/>
        <label>2</label>
    </ligand>
</feature>
<feature type="binding site" evidence="10">
    <location>
        <position position="278"/>
    </location>
    <ligand>
        <name>Ca(2+)</name>
        <dbReference type="ChEBI" id="CHEBI:29108"/>
        <label>2</label>
    </ligand>
</feature>
<feature type="binding site" evidence="5">
    <location>
        <position position="1660"/>
    </location>
    <ligand>
        <name>Ca(2+)</name>
        <dbReference type="ChEBI" id="CHEBI:29108"/>
    </ligand>
</feature>
<feature type="binding site" evidence="5">
    <location>
        <position position="1663"/>
    </location>
    <ligand>
        <name>Ca(2+)</name>
        <dbReference type="ChEBI" id="CHEBI:29108"/>
    </ligand>
</feature>
<feature type="binding site" evidence="5">
    <location>
        <position position="1666"/>
    </location>
    <ligand>
        <name>Ca(2+)</name>
        <dbReference type="ChEBI" id="CHEBI:29108"/>
    </ligand>
</feature>
<feature type="modified residue" description="Phosphoserine" evidence="25 28">
    <location>
        <position position="203"/>
    </location>
</feature>
<feature type="modified residue" description="Phosphoserine" evidence="28">
    <location>
        <position position="318"/>
    </location>
</feature>
<feature type="modified residue" description="Phosphoserine" evidence="27 28">
    <location>
        <position position="334"/>
    </location>
</feature>
<feature type="modified residue" description="Phosphoserine" evidence="28">
    <location>
        <position position="335"/>
    </location>
</feature>
<feature type="modified residue" description="Phosphoserine" evidence="3">
    <location>
        <position position="685"/>
    </location>
</feature>
<feature type="modified residue" description="Phosphothreonine" evidence="28">
    <location>
        <position position="890"/>
    </location>
</feature>
<feature type="modified residue" description="Phosphoserine" evidence="2">
    <location>
        <position position="894"/>
    </location>
</feature>
<feature type="modified residue" description="Phosphoserine" evidence="27 28">
    <location>
        <position position="895"/>
    </location>
</feature>
<feature type="modified residue" description="Phosphoserine" evidence="27 28">
    <location>
        <position position="897"/>
    </location>
</feature>
<feature type="modified residue" description="Phosphoserine" evidence="3">
    <location>
        <position position="971"/>
    </location>
</feature>
<feature type="modified residue" description="Phosphothreonine" evidence="27">
    <location>
        <position position="977"/>
    </location>
</feature>
<feature type="modified residue" description="Phosphoserine" evidence="2">
    <location>
        <position position="979"/>
    </location>
</feature>
<feature type="modified residue" description="Phosphoserine" evidence="2">
    <location>
        <position position="988"/>
    </location>
</feature>
<feature type="modified residue" description="Phosphoserine" evidence="26 28">
    <location>
        <position position="1130"/>
    </location>
</feature>
<feature type="modified residue" description="Phosphothreonine" evidence="28">
    <location>
        <position position="1137"/>
    </location>
</feature>
<feature type="modified residue" description="Phosphoserine" evidence="28">
    <location>
        <position position="1638"/>
    </location>
</feature>
<feature type="splice variant" id="VSP_004296" description="In isoform 2." evidence="22">
    <location>
        <begin position="1214"/>
        <end position="1714"/>
    </location>
</feature>
<feature type="sequence conflict" description="In Ref. 1; AAD19749/AAD19746." evidence="23" ref="1">
    <original>L</original>
    <variation>W</variation>
    <location>
        <position position="179"/>
    </location>
</feature>
<feature type="sequence conflict" description="In Ref. 1; AAD19749/AAD19746." evidence="23" ref="1">
    <original>R</original>
    <variation>A</variation>
    <location>
        <position position="402"/>
    </location>
</feature>
<feature type="strand" evidence="29">
    <location>
        <begin position="1151"/>
        <end position="1157"/>
    </location>
</feature>
<feature type="strand" evidence="29">
    <location>
        <begin position="1174"/>
        <end position="1179"/>
    </location>
</feature>
<feature type="strand" evidence="29">
    <location>
        <begin position="1185"/>
        <end position="1190"/>
    </location>
</feature>
<feature type="strand" evidence="29">
    <location>
        <begin position="1193"/>
        <end position="1198"/>
    </location>
</feature>
<feature type="helix" evidence="29">
    <location>
        <begin position="1199"/>
        <end position="1201"/>
    </location>
</feature>
<feature type="strand" evidence="29">
    <location>
        <begin position="1202"/>
        <end position="1204"/>
    </location>
</feature>
<feature type="helix" evidence="29">
    <location>
        <begin position="1205"/>
        <end position="1207"/>
    </location>
</feature>
<feature type="helix" evidence="29">
    <location>
        <begin position="1210"/>
        <end position="1214"/>
    </location>
</feature>
<feature type="helix" evidence="29">
    <location>
        <begin position="1221"/>
        <end position="1223"/>
    </location>
</feature>
<feature type="helix" evidence="29">
    <location>
        <begin position="1226"/>
        <end position="1255"/>
    </location>
</feature>
<feature type="helix" evidence="29">
    <location>
        <begin position="1258"/>
        <end position="1261"/>
    </location>
</feature>
<feature type="helix" evidence="29">
    <location>
        <begin position="1268"/>
        <end position="1275"/>
    </location>
</feature>
<feature type="helix" evidence="29">
    <location>
        <begin position="1278"/>
        <end position="1299"/>
    </location>
</feature>
<feature type="helix" evidence="29">
    <location>
        <begin position="1309"/>
        <end position="1315"/>
    </location>
</feature>
<feature type="helix" evidence="29">
    <location>
        <begin position="1316"/>
        <end position="1320"/>
    </location>
</feature>
<feature type="helix" evidence="29">
    <location>
        <begin position="1321"/>
        <end position="1342"/>
    </location>
</feature>
<feature type="helix" evidence="29">
    <location>
        <begin position="1344"/>
        <end position="1353"/>
    </location>
</feature>
<feature type="helix" evidence="29">
    <location>
        <begin position="1357"/>
        <end position="1359"/>
    </location>
</feature>
<feature type="helix" evidence="29">
    <location>
        <begin position="1364"/>
        <end position="1367"/>
    </location>
</feature>
<feature type="helix" evidence="29">
    <location>
        <begin position="1370"/>
        <end position="1386"/>
    </location>
</feature>
<feature type="helix" evidence="29">
    <location>
        <begin position="1396"/>
        <end position="1422"/>
    </location>
</feature>
<feature type="helix" evidence="29">
    <location>
        <begin position="1423"/>
        <end position="1425"/>
    </location>
</feature>
<reference key="1">
    <citation type="journal article" date="1999" name="EMBO J.">
        <title>The EH and SH3 domain Ese proteins regulate endocytosis by linking to dynamin and Eps15.</title>
        <authorList>
            <person name="Sengar A.S."/>
            <person name="Wang W."/>
            <person name="Bishay J."/>
            <person name="Cohen S."/>
            <person name="Egan S.E."/>
        </authorList>
    </citation>
    <scope>NUCLEOTIDE SEQUENCE [MRNA] (ISOFORM 1)</scope>
    <scope>FUNCTION</scope>
    <scope>INTERACTION WITH EPS15 AND DNM1</scope>
    <scope>SUBCELLULAR LOCATION</scope>
    <scope>TISSUE SPECIFICITY</scope>
</reference>
<reference key="2">
    <citation type="journal article" date="2009" name="PLoS Biol.">
        <title>Lineage-specific biology revealed by a finished genome assembly of the mouse.</title>
        <authorList>
            <person name="Church D.M."/>
            <person name="Goodstadt L."/>
            <person name="Hillier L.W."/>
            <person name="Zody M.C."/>
            <person name="Goldstein S."/>
            <person name="She X."/>
            <person name="Bult C.J."/>
            <person name="Agarwala R."/>
            <person name="Cherry J.L."/>
            <person name="DiCuccio M."/>
            <person name="Hlavina W."/>
            <person name="Kapustin Y."/>
            <person name="Meric P."/>
            <person name="Maglott D."/>
            <person name="Birtle Z."/>
            <person name="Marques A.C."/>
            <person name="Graves T."/>
            <person name="Zhou S."/>
            <person name="Teague B."/>
            <person name="Potamousis K."/>
            <person name="Churas C."/>
            <person name="Place M."/>
            <person name="Herschleb J."/>
            <person name="Runnheim R."/>
            <person name="Forrest D."/>
            <person name="Amos-Landgraf J."/>
            <person name="Schwartz D.C."/>
            <person name="Cheng Z."/>
            <person name="Lindblad-Toh K."/>
            <person name="Eichler E.E."/>
            <person name="Ponting C.P."/>
        </authorList>
    </citation>
    <scope>NUCLEOTIDE SEQUENCE [LARGE SCALE GENOMIC DNA]</scope>
    <source>
        <strain>C57BL/6J</strain>
    </source>
</reference>
<reference key="3">
    <citation type="submission" date="2001-03" db="EMBL/GenBank/DDBJ databases">
        <title>Mouse homologues of human chromosome 21 genes.</title>
        <authorList>
            <person name="Skripkina I.Y."/>
            <person name="Tsyba L.O."/>
            <person name="Anoprienko O.V."/>
            <person name="Slavov D."/>
            <person name="Tassone F."/>
            <person name="Rynditch A.V."/>
            <person name="Gardiner K."/>
        </authorList>
    </citation>
    <scope>NUCLEOTIDE SEQUENCE [GENOMIC DNA] OF 966-1714</scope>
    <scope>NUCLEOTIDE SEQUENCE [MRNA] OF 545-599 (ISOFORMS 1 AND 2)</scope>
    <source>
        <strain>129/Ola</strain>
        <tissue>Spleen</tissue>
    </source>
</reference>
<reference key="4">
    <citation type="journal article" date="2002" name="J. Biol. Chem.">
        <title>The activity of the GTPase-activating protein CdGAP is regulated by the endocytic protein intersectin.</title>
        <authorList>
            <person name="Jenna S."/>
            <person name="Hussain N.K."/>
            <person name="Danek E.I."/>
            <person name="Triki I."/>
            <person name="Wasiak S."/>
            <person name="McPherson P.S."/>
            <person name="Lamarche-Vane N."/>
        </authorList>
    </citation>
    <scope>INTERACTION WITH ARHGAP31</scope>
</reference>
<reference key="5">
    <citation type="journal article" date="2004" name="Mol. Cell. Proteomics">
        <title>Phosphoproteomic analysis of the developing mouse brain.</title>
        <authorList>
            <person name="Ballif B.A."/>
            <person name="Villen J."/>
            <person name="Beausoleil S.A."/>
            <person name="Schwartz D."/>
            <person name="Gygi S.P."/>
        </authorList>
    </citation>
    <scope>PHOSPHORYLATION [LARGE SCALE ANALYSIS] AT SER-203</scope>
    <scope>IDENTIFICATION BY MASS SPECTROMETRY [LARGE SCALE ANALYSIS]</scope>
    <source>
        <tissue>Embryonic brain</tissue>
    </source>
</reference>
<reference key="6">
    <citation type="journal article" date="2006" name="Mol. Cell. Proteomics">
        <title>Comprehensive identification of phosphorylation sites in postsynaptic density preparations.</title>
        <authorList>
            <person name="Trinidad J.C."/>
            <person name="Specht C.G."/>
            <person name="Thalhammer A."/>
            <person name="Schoepfer R."/>
            <person name="Burlingame A.L."/>
        </authorList>
    </citation>
    <scope>PHOSPHORYLATION [LARGE SCALE ANALYSIS] AT SER-1130</scope>
    <scope>IDENTIFICATION BY MASS SPECTROMETRY [LARGE SCALE ANALYSIS]</scope>
    <source>
        <tissue>Brain</tissue>
    </source>
</reference>
<reference key="7">
    <citation type="journal article" date="2006" name="Mol. Pharmacol.">
        <title>Intersectin regulates epidermal growth factor receptor endocytosis, ubiquitylation, and signaling.</title>
        <authorList>
            <person name="Martin N.P."/>
            <person name="Mohney R.P."/>
            <person name="Dunn S."/>
            <person name="Das M."/>
            <person name="Scappini E."/>
            <person name="O'Bryan J.P."/>
        </authorList>
    </citation>
    <scope>FUNCTION</scope>
    <scope>SUBCELLULAR LOCATION</scope>
    <scope>INTERACTION WITH CBL</scope>
    <scope>TISSUE SPECIFICITY</scope>
</reference>
<reference key="8">
    <citation type="journal article" date="2007" name="Proc. Natl. Acad. Sci. U.S.A.">
        <title>Large-scale phosphorylation analysis of mouse liver.</title>
        <authorList>
            <person name="Villen J."/>
            <person name="Beausoleil S.A."/>
            <person name="Gerber S.A."/>
            <person name="Gygi S.P."/>
        </authorList>
    </citation>
    <scope>PHOSPHORYLATION [LARGE SCALE ANALYSIS] AT SER-334; SER-895; SER-897 AND THR-977</scope>
    <scope>IDENTIFICATION BY MASS SPECTROMETRY [LARGE SCALE ANALYSIS]</scope>
    <source>
        <tissue>Liver</tissue>
    </source>
</reference>
<reference key="9">
    <citation type="journal article" date="2008" name="Hum. Mol. Genet.">
        <title>Mice deficient for the chromosome 21 ortholog Itsn1 exhibit vesicle-trafficking abnormalities.</title>
        <authorList>
            <person name="Yu Y."/>
            <person name="Chu P.Y."/>
            <person name="Bowser D.N."/>
            <person name="Keating D.J."/>
            <person name="Dubach D."/>
            <person name="Harper I."/>
            <person name="Tkalcevic J."/>
            <person name="Finkelstein D.I."/>
            <person name="Pritchard M.A."/>
        </authorList>
    </citation>
    <scope>FUNCTION</scope>
    <scope>DISRUPTION PHENOTYPE</scope>
    <scope>TISSUE SPECIFICITY</scope>
    <scope>ALTERNATIVE SPLICING</scope>
</reference>
<reference key="10">
    <citation type="journal article" date="2008" name="J. Proteome Res.">
        <title>Specific phosphopeptide enrichment with immobilized titanium ion affinity chromatography adsorbent for phosphoproteome analysis.</title>
        <authorList>
            <person name="Zhou H."/>
            <person name="Ye M."/>
            <person name="Dong J."/>
            <person name="Han G."/>
            <person name="Jiang X."/>
            <person name="Wu R."/>
            <person name="Zou H."/>
        </authorList>
    </citation>
    <scope>IDENTIFICATION BY MASS SPECTROMETRY [LARGE SCALE ANALYSIS]</scope>
    <source>
        <tissue>Liver</tissue>
    </source>
</reference>
<reference key="11">
    <citation type="journal article" date="2009" name="Immunity">
        <title>The phagosomal proteome in interferon-gamma-activated macrophages.</title>
        <authorList>
            <person name="Trost M."/>
            <person name="English L."/>
            <person name="Lemieux S."/>
            <person name="Courcelles M."/>
            <person name="Desjardins M."/>
            <person name="Thibault P."/>
        </authorList>
    </citation>
    <scope>IDENTIFICATION BY MASS SPECTROMETRY [LARGE SCALE ANALYSIS]</scope>
</reference>
<reference key="12">
    <citation type="journal article" date="2010" name="Cell">
        <title>A tissue-specific atlas of mouse protein phosphorylation and expression.</title>
        <authorList>
            <person name="Huttlin E.L."/>
            <person name="Jedrychowski M.P."/>
            <person name="Elias J.E."/>
            <person name="Goswami T."/>
            <person name="Rad R."/>
            <person name="Beausoleil S.A."/>
            <person name="Villen J."/>
            <person name="Haas W."/>
            <person name="Sowa M.E."/>
            <person name="Gygi S.P."/>
        </authorList>
    </citation>
    <scope>PHOSPHORYLATION [LARGE SCALE ANALYSIS] AT SER-203; SER-318; SER-334; SER-335; THR-890; SER-895; SER-897; SER-1130; THR-1137 AND SER-1638</scope>
    <scope>IDENTIFICATION BY MASS SPECTROMETRY [LARGE SCALE ANALYSIS]</scope>
    <source>
        <tissue>Brain</tissue>
        <tissue>Brown adipose tissue</tissue>
        <tissue>Heart</tissue>
        <tissue>Kidney</tissue>
        <tissue>Liver</tissue>
        <tissue>Lung</tissue>
        <tissue>Pancreas</tissue>
        <tissue>Spleen</tissue>
        <tissue>Testis</tissue>
    </source>
</reference>
<reference key="13">
    <citation type="journal article" date="2010" name="Science">
        <title>FCHo proteins are nucleators of clathrin-mediated endocytosis.</title>
        <authorList>
            <person name="Henne W.M."/>
            <person name="Boucrot E."/>
            <person name="Meinecke M."/>
            <person name="Evergren E."/>
            <person name="Vallis Y."/>
            <person name="Mittal R."/>
            <person name="McMahon H.T."/>
        </authorList>
    </citation>
    <scope>INTERACTION WITH FCHO2</scope>
</reference>
<reference key="14">
    <citation type="journal article" date="2013" name="Proc. Natl. Acad. Sci. U.S.A.">
        <title>Fast neurotransmitter release regulated by the endocytic scaffold intersectin.</title>
        <authorList>
            <person name="Sakaba T."/>
            <person name="Kononenko N.L."/>
            <person name="Bacetic J."/>
            <person name="Pechstein A."/>
            <person name="Schmoranzer J."/>
            <person name="Yao L."/>
            <person name="Barth H."/>
            <person name="Shupliakov O."/>
            <person name="Kobler O."/>
            <person name="Aktories K."/>
            <person name="Haucke V."/>
        </authorList>
    </citation>
    <scope>FUNCTION</scope>
    <scope>TISSUE SPECIFICITY</scope>
    <scope>SUBCELLULAR LOCATION</scope>
    <scope>DISRUPTION PHENOTYPE</scope>
</reference>
<reference key="15">
    <citation type="journal article" date="2016" name="J. Biol. Chem.">
        <title>A Novel Topology of Proline-rich Transmembrane Protein 2 (PRRT2): hints for an intracellular function at the synapse.</title>
        <authorList>
            <person name="Rossi P."/>
            <person name="Sterlini B."/>
            <person name="Castroflorio E."/>
            <person name="Marte A."/>
            <person name="Onofri F."/>
            <person name="Valtorta F."/>
            <person name="Maragliano L."/>
            <person name="Corradi A."/>
            <person name="Benfenati F."/>
        </authorList>
    </citation>
    <scope>INTERACTION WITH PRRT2</scope>
</reference>
<reference key="16">
    <citation type="journal article" date="2018" name="Biochem. J.">
        <title>Intersectin goes nuclear: secret life of an endocytic protein.</title>
        <authorList>
            <person name="Alvisi G."/>
            <person name="Paolini L."/>
            <person name="Contarini A."/>
            <person name="Zambarda C."/>
            <person name="Di Antonio V."/>
            <person name="Colosini A."/>
            <person name="Mercandelli N."/>
            <person name="Timmoneri M."/>
            <person name="Palu G."/>
            <person name="Caimi L."/>
            <person name="Ricotta D."/>
            <person name="Radeghieri A."/>
        </authorList>
    </citation>
    <scope>INTERACTION WITH KPNA1</scope>
</reference>
<reference key="17">
    <citation type="journal article" date="2010" name="PLoS ONE">
        <title>The minimal autoinhibited unit of the guanine nucleotide exchange factor intersectin.</title>
        <authorList>
            <person name="Ahmad K.F."/>
            <person name="Lim W.A."/>
        </authorList>
    </citation>
    <scope>X-RAY CRYSTALLOGRAPHY (2.4 ANGSTROMS) OF 1151-1431</scope>
    <scope>SH3 DOMAIN</scope>
</reference>